<dbReference type="EMBL" id="CP000681">
    <property type="protein sequence ID" value="ABP73739.1"/>
    <property type="molecule type" value="Genomic_DNA"/>
</dbReference>
<dbReference type="SMR" id="A4Y1A6"/>
<dbReference type="STRING" id="319224.Sputcn32_0003"/>
<dbReference type="KEGG" id="spc:Sputcn32_0003"/>
<dbReference type="eggNOG" id="COG1195">
    <property type="taxonomic scope" value="Bacteria"/>
</dbReference>
<dbReference type="HOGENOM" id="CLU_040267_0_0_6"/>
<dbReference type="GO" id="GO:0005737">
    <property type="term" value="C:cytoplasm"/>
    <property type="evidence" value="ECO:0007669"/>
    <property type="project" value="UniProtKB-SubCell"/>
</dbReference>
<dbReference type="GO" id="GO:0005524">
    <property type="term" value="F:ATP binding"/>
    <property type="evidence" value="ECO:0007669"/>
    <property type="project" value="UniProtKB-UniRule"/>
</dbReference>
<dbReference type="GO" id="GO:0003697">
    <property type="term" value="F:single-stranded DNA binding"/>
    <property type="evidence" value="ECO:0007669"/>
    <property type="project" value="UniProtKB-UniRule"/>
</dbReference>
<dbReference type="GO" id="GO:0006260">
    <property type="term" value="P:DNA replication"/>
    <property type="evidence" value="ECO:0007669"/>
    <property type="project" value="UniProtKB-UniRule"/>
</dbReference>
<dbReference type="GO" id="GO:0000731">
    <property type="term" value="P:DNA synthesis involved in DNA repair"/>
    <property type="evidence" value="ECO:0007669"/>
    <property type="project" value="TreeGrafter"/>
</dbReference>
<dbReference type="GO" id="GO:0006302">
    <property type="term" value="P:double-strand break repair"/>
    <property type="evidence" value="ECO:0007669"/>
    <property type="project" value="TreeGrafter"/>
</dbReference>
<dbReference type="GO" id="GO:0009432">
    <property type="term" value="P:SOS response"/>
    <property type="evidence" value="ECO:0007669"/>
    <property type="project" value="UniProtKB-UniRule"/>
</dbReference>
<dbReference type="Gene3D" id="3.40.50.300">
    <property type="entry name" value="P-loop containing nucleotide triphosphate hydrolases"/>
    <property type="match status" value="1"/>
</dbReference>
<dbReference type="Gene3D" id="1.20.1050.90">
    <property type="entry name" value="RecF/RecN/SMC, N-terminal domain"/>
    <property type="match status" value="1"/>
</dbReference>
<dbReference type="HAMAP" id="MF_00365">
    <property type="entry name" value="RecF"/>
    <property type="match status" value="1"/>
</dbReference>
<dbReference type="InterPro" id="IPR001238">
    <property type="entry name" value="DNA-binding_RecF"/>
</dbReference>
<dbReference type="InterPro" id="IPR018078">
    <property type="entry name" value="DNA-binding_RecF_CS"/>
</dbReference>
<dbReference type="InterPro" id="IPR027417">
    <property type="entry name" value="P-loop_NTPase"/>
</dbReference>
<dbReference type="InterPro" id="IPR003395">
    <property type="entry name" value="RecF/RecN/SMC_N"/>
</dbReference>
<dbReference type="InterPro" id="IPR042174">
    <property type="entry name" value="RecF_2"/>
</dbReference>
<dbReference type="NCBIfam" id="TIGR00611">
    <property type="entry name" value="recf"/>
    <property type="match status" value="1"/>
</dbReference>
<dbReference type="PANTHER" id="PTHR32182">
    <property type="entry name" value="DNA REPLICATION AND REPAIR PROTEIN RECF"/>
    <property type="match status" value="1"/>
</dbReference>
<dbReference type="PANTHER" id="PTHR32182:SF0">
    <property type="entry name" value="DNA REPLICATION AND REPAIR PROTEIN RECF"/>
    <property type="match status" value="1"/>
</dbReference>
<dbReference type="Pfam" id="PF02463">
    <property type="entry name" value="SMC_N"/>
    <property type="match status" value="1"/>
</dbReference>
<dbReference type="SUPFAM" id="SSF52540">
    <property type="entry name" value="P-loop containing nucleoside triphosphate hydrolases"/>
    <property type="match status" value="1"/>
</dbReference>
<dbReference type="PROSITE" id="PS00617">
    <property type="entry name" value="RECF_1"/>
    <property type="match status" value="1"/>
</dbReference>
<dbReference type="PROSITE" id="PS00618">
    <property type="entry name" value="RECF_2"/>
    <property type="match status" value="1"/>
</dbReference>
<accession>A4Y1A6</accession>
<comment type="function">
    <text evidence="1">The RecF protein is involved in DNA metabolism; it is required for DNA replication and normal SOS inducibility. RecF binds preferentially to single-stranded, linear DNA. It also seems to bind ATP.</text>
</comment>
<comment type="subcellular location">
    <subcellularLocation>
        <location evidence="1">Cytoplasm</location>
    </subcellularLocation>
</comment>
<comment type="similarity">
    <text evidence="1">Belongs to the RecF family.</text>
</comment>
<proteinExistence type="inferred from homology"/>
<protein>
    <recommendedName>
        <fullName evidence="1">DNA replication and repair protein RecF</fullName>
    </recommendedName>
</protein>
<gene>
    <name evidence="1" type="primary">recF</name>
    <name type="ordered locus">Sputcn32_0003</name>
</gene>
<organism>
    <name type="scientific">Shewanella putrefaciens (strain CN-32 / ATCC BAA-453)</name>
    <dbReference type="NCBI Taxonomy" id="319224"/>
    <lineage>
        <taxon>Bacteria</taxon>
        <taxon>Pseudomonadati</taxon>
        <taxon>Pseudomonadota</taxon>
        <taxon>Gammaproteobacteria</taxon>
        <taxon>Alteromonadales</taxon>
        <taxon>Shewanellaceae</taxon>
        <taxon>Shewanella</taxon>
    </lineage>
</organism>
<name>RECF_SHEPC</name>
<evidence type="ECO:0000255" key="1">
    <source>
        <dbReference type="HAMAP-Rule" id="MF_00365"/>
    </source>
</evidence>
<keyword id="KW-0067">ATP-binding</keyword>
<keyword id="KW-0963">Cytoplasm</keyword>
<keyword id="KW-0227">DNA damage</keyword>
<keyword id="KW-0234">DNA repair</keyword>
<keyword id="KW-0235">DNA replication</keyword>
<keyword id="KW-0238">DNA-binding</keyword>
<keyword id="KW-0547">Nucleotide-binding</keyword>
<keyword id="KW-0742">SOS response</keyword>
<sequence>MSLTRLNIEAFRNIQFAQLIPAPGINVIYGQNGSGKTSILEAIYFLGMGRSFRSHLSQRVINNDNDKLTLFATLNLARGDSKIGLRRFRSGETEVKIDGEKVKRLSTLAETLPIQVITPESFSLLFEGPKSRRQFIDWGAFHADPQFYGAWTNVRRVIKQRNQLLRNGAVYTHIQFWDQEFVRYAEQVTEIRNHYVDSLNGLLKGIIGEFLPSVDVKVSFTRGWDSKTDFAELLENQYSRDLATGHTVSGPHKADLRLRVGNLPAQDALSRGQLKLLVCALRIAQGKLLKQQIDKHSIYLVDDLPSELDAQHRQLLLKQLTDTGAQVFVTAIDPAAIVDSLHTPPNRMFHVEQGRVTVVE</sequence>
<feature type="chain" id="PRO_1000048575" description="DNA replication and repair protein RecF">
    <location>
        <begin position="1"/>
        <end position="360"/>
    </location>
</feature>
<feature type="binding site" evidence="1">
    <location>
        <begin position="30"/>
        <end position="37"/>
    </location>
    <ligand>
        <name>ATP</name>
        <dbReference type="ChEBI" id="CHEBI:30616"/>
    </ligand>
</feature>
<reference key="1">
    <citation type="submission" date="2007-04" db="EMBL/GenBank/DDBJ databases">
        <title>Complete sequence of Shewanella putrefaciens CN-32.</title>
        <authorList>
            <consortium name="US DOE Joint Genome Institute"/>
            <person name="Copeland A."/>
            <person name="Lucas S."/>
            <person name="Lapidus A."/>
            <person name="Barry K."/>
            <person name="Detter J.C."/>
            <person name="Glavina del Rio T."/>
            <person name="Hammon N."/>
            <person name="Israni S."/>
            <person name="Dalin E."/>
            <person name="Tice H."/>
            <person name="Pitluck S."/>
            <person name="Chain P."/>
            <person name="Malfatti S."/>
            <person name="Shin M."/>
            <person name="Vergez L."/>
            <person name="Schmutz J."/>
            <person name="Larimer F."/>
            <person name="Land M."/>
            <person name="Hauser L."/>
            <person name="Kyrpides N."/>
            <person name="Mikhailova N."/>
            <person name="Romine M.F."/>
            <person name="Fredrickson J."/>
            <person name="Tiedje J."/>
            <person name="Richardson P."/>
        </authorList>
    </citation>
    <scope>NUCLEOTIDE SEQUENCE [LARGE SCALE GENOMIC DNA]</scope>
    <source>
        <strain>CN-32 / ATCC BAA-453</strain>
    </source>
</reference>